<feature type="chain" id="PRO_0000377955" description="Uncharacterized protein 057L">
    <location>
        <begin position="1"/>
        <end position="130"/>
    </location>
</feature>
<gene>
    <name type="ORF">IIV3-057L</name>
</gene>
<protein>
    <recommendedName>
        <fullName>Uncharacterized protein 057L</fullName>
    </recommendedName>
</protein>
<keyword id="KW-1185">Reference proteome</keyword>
<accession>Q197A3</accession>
<dbReference type="EMBL" id="DQ643392">
    <property type="protein sequence ID" value="ABF82087.1"/>
    <property type="molecule type" value="Genomic_DNA"/>
</dbReference>
<dbReference type="RefSeq" id="YP_654629.1">
    <property type="nucleotide sequence ID" value="NC_008187.1"/>
</dbReference>
<dbReference type="KEGG" id="vg:4156307"/>
<dbReference type="Proteomes" id="UP000001358">
    <property type="component" value="Genome"/>
</dbReference>
<reference key="1">
    <citation type="journal article" date="2006" name="J. Virol.">
        <title>Genome of invertebrate iridescent virus type 3 (mosquito iridescent virus).</title>
        <authorList>
            <person name="Delhon G."/>
            <person name="Tulman E.R."/>
            <person name="Afonso C.L."/>
            <person name="Lu Z."/>
            <person name="Becnel J.J."/>
            <person name="Moser B.A."/>
            <person name="Kutish G.F."/>
            <person name="Rock D.L."/>
        </authorList>
    </citation>
    <scope>NUCLEOTIDE SEQUENCE [LARGE SCALE GENOMIC DNA]</scope>
</reference>
<sequence>MFKIYRTSCMGQHQSQFLHSGTVVQTVDGVTTTSFFQPCLVFPFSIEIISISLVSLNTTNETKLIKMSIMENSELVDYNESAYTLAHLPGKQMTYLKYPAPFTIRQHQPFFFVHHGDLGDASLTLEYRIK</sequence>
<organismHost>
    <name type="scientific">Aedes vexans</name>
    <name type="common">Inland floodwater mosquito</name>
    <name type="synonym">Culex vexans</name>
    <dbReference type="NCBI Taxonomy" id="7163"/>
</organismHost>
<organismHost>
    <name type="scientific">Culex territans</name>
    <dbReference type="NCBI Taxonomy" id="42431"/>
</organismHost>
<organismHost>
    <name type="scientific">Culiseta annulata</name>
    <dbReference type="NCBI Taxonomy" id="332058"/>
</organismHost>
<organismHost>
    <name type="scientific">Ochlerotatus sollicitans</name>
    <name type="common">eastern saltmarsh mosquito</name>
    <dbReference type="NCBI Taxonomy" id="310513"/>
</organismHost>
<organismHost>
    <name type="scientific">Ochlerotatus taeniorhynchus</name>
    <name type="common">Black salt marsh mosquito</name>
    <name type="synonym">Aedes taeniorhynchus</name>
    <dbReference type="NCBI Taxonomy" id="329105"/>
</organismHost>
<organismHost>
    <name type="scientific">Psorophora ferox</name>
    <dbReference type="NCBI Taxonomy" id="7183"/>
</organismHost>
<organism>
    <name type="scientific">Invertebrate iridescent virus 3</name>
    <name type="common">IIV-3</name>
    <name type="synonym">Mosquito iridescent virus</name>
    <dbReference type="NCBI Taxonomy" id="345201"/>
    <lineage>
        <taxon>Viruses</taxon>
        <taxon>Varidnaviria</taxon>
        <taxon>Bamfordvirae</taxon>
        <taxon>Nucleocytoviricota</taxon>
        <taxon>Megaviricetes</taxon>
        <taxon>Pimascovirales</taxon>
        <taxon>Iridoviridae</taxon>
        <taxon>Betairidovirinae</taxon>
        <taxon>Chloriridovirus</taxon>
    </lineage>
</organism>
<name>057L_IIV3</name>
<proteinExistence type="predicted"/>